<keyword id="KW-0687">Ribonucleoprotein</keyword>
<keyword id="KW-0689">Ribosomal protein</keyword>
<keyword id="KW-0694">RNA-binding</keyword>
<keyword id="KW-0699">rRNA-binding</keyword>
<keyword id="KW-0820">tRNA-binding</keyword>
<organism>
    <name type="scientific">Streptococcus pyogenes serotype M3 (strain SSI-1)</name>
    <dbReference type="NCBI Taxonomy" id="193567"/>
    <lineage>
        <taxon>Bacteria</taxon>
        <taxon>Bacillati</taxon>
        <taxon>Bacillota</taxon>
        <taxon>Bacilli</taxon>
        <taxon>Lactobacillales</taxon>
        <taxon>Streptococcaceae</taxon>
        <taxon>Streptococcus</taxon>
    </lineage>
</organism>
<dbReference type="EMBL" id="BA000034">
    <property type="protein sequence ID" value="BAC63298.1"/>
    <property type="molecule type" value="Genomic_DNA"/>
</dbReference>
<dbReference type="RefSeq" id="WP_002986049.1">
    <property type="nucleotide sequence ID" value="NC_004606.1"/>
</dbReference>
<dbReference type="SMR" id="P0DE67"/>
<dbReference type="GeneID" id="69900197"/>
<dbReference type="KEGG" id="sps:SPs0203"/>
<dbReference type="HOGENOM" id="CLU_104295_1_2_9"/>
<dbReference type="GO" id="GO:0015935">
    <property type="term" value="C:small ribosomal subunit"/>
    <property type="evidence" value="ECO:0007669"/>
    <property type="project" value="InterPro"/>
</dbReference>
<dbReference type="GO" id="GO:0019843">
    <property type="term" value="F:rRNA binding"/>
    <property type="evidence" value="ECO:0007669"/>
    <property type="project" value="UniProtKB-UniRule"/>
</dbReference>
<dbReference type="GO" id="GO:0003735">
    <property type="term" value="F:structural constituent of ribosome"/>
    <property type="evidence" value="ECO:0007669"/>
    <property type="project" value="InterPro"/>
</dbReference>
<dbReference type="GO" id="GO:0000049">
    <property type="term" value="F:tRNA binding"/>
    <property type="evidence" value="ECO:0007669"/>
    <property type="project" value="UniProtKB-UniRule"/>
</dbReference>
<dbReference type="GO" id="GO:0006412">
    <property type="term" value="P:translation"/>
    <property type="evidence" value="ECO:0007669"/>
    <property type="project" value="UniProtKB-UniRule"/>
</dbReference>
<dbReference type="CDD" id="cd03368">
    <property type="entry name" value="Ribosomal_S12"/>
    <property type="match status" value="1"/>
</dbReference>
<dbReference type="FunFam" id="2.40.50.140:FF:000001">
    <property type="entry name" value="30S ribosomal protein S12"/>
    <property type="match status" value="1"/>
</dbReference>
<dbReference type="Gene3D" id="2.40.50.140">
    <property type="entry name" value="Nucleic acid-binding proteins"/>
    <property type="match status" value="1"/>
</dbReference>
<dbReference type="HAMAP" id="MF_00403_B">
    <property type="entry name" value="Ribosomal_uS12_B"/>
    <property type="match status" value="1"/>
</dbReference>
<dbReference type="InterPro" id="IPR012340">
    <property type="entry name" value="NA-bd_OB-fold"/>
</dbReference>
<dbReference type="InterPro" id="IPR006032">
    <property type="entry name" value="Ribosomal_uS12"/>
</dbReference>
<dbReference type="InterPro" id="IPR005679">
    <property type="entry name" value="Ribosomal_uS12_bac"/>
</dbReference>
<dbReference type="NCBIfam" id="TIGR00981">
    <property type="entry name" value="rpsL_bact"/>
    <property type="match status" value="1"/>
</dbReference>
<dbReference type="PANTHER" id="PTHR11652">
    <property type="entry name" value="30S RIBOSOMAL PROTEIN S12 FAMILY MEMBER"/>
    <property type="match status" value="1"/>
</dbReference>
<dbReference type="Pfam" id="PF00164">
    <property type="entry name" value="Ribosom_S12_S23"/>
    <property type="match status" value="1"/>
</dbReference>
<dbReference type="PRINTS" id="PR01034">
    <property type="entry name" value="RIBOSOMALS12"/>
</dbReference>
<dbReference type="SUPFAM" id="SSF50249">
    <property type="entry name" value="Nucleic acid-binding proteins"/>
    <property type="match status" value="1"/>
</dbReference>
<dbReference type="PROSITE" id="PS00055">
    <property type="entry name" value="RIBOSOMAL_S12"/>
    <property type="match status" value="1"/>
</dbReference>
<reference key="1">
    <citation type="journal article" date="2003" name="Genome Res.">
        <title>Genome sequence of an M3 strain of Streptococcus pyogenes reveals a large-scale genomic rearrangement in invasive strains and new insights into phage evolution.</title>
        <authorList>
            <person name="Nakagawa I."/>
            <person name="Kurokawa K."/>
            <person name="Yamashita A."/>
            <person name="Nakata M."/>
            <person name="Tomiyasu Y."/>
            <person name="Okahashi N."/>
            <person name="Kawabata S."/>
            <person name="Yamazaki K."/>
            <person name="Shiba T."/>
            <person name="Yasunaga T."/>
            <person name="Hayashi H."/>
            <person name="Hattori M."/>
            <person name="Hamada S."/>
        </authorList>
    </citation>
    <scope>NUCLEOTIDE SEQUENCE [LARGE SCALE GENOMIC DNA]</scope>
    <source>
        <strain>SSI-1</strain>
    </source>
</reference>
<accession>P0DE67</accession>
<accession>P58172</accession>
<accession>P66377</accession>
<gene>
    <name evidence="1" type="primary">rpsL</name>
    <name type="ordered locus">SPs0203</name>
</gene>
<proteinExistence type="inferred from homology"/>
<evidence type="ECO:0000255" key="1">
    <source>
        <dbReference type="HAMAP-Rule" id="MF_00403"/>
    </source>
</evidence>
<evidence type="ECO:0000256" key="2">
    <source>
        <dbReference type="SAM" id="MobiDB-lite"/>
    </source>
</evidence>
<evidence type="ECO:0000305" key="3"/>
<comment type="function">
    <text evidence="1">With S4 and S5 plays an important role in translational accuracy.</text>
</comment>
<comment type="function">
    <text evidence="1">Interacts with and stabilizes bases of the 16S rRNA that are involved in tRNA selection in the A site and with the mRNA backbone. Located at the interface of the 30S and 50S subunits, it traverses the body of the 30S subunit contacting proteins on the other side and probably holding the rRNA structure together. The combined cluster of proteins S8, S12 and S17 appears to hold together the shoulder and platform of the 30S subunit.</text>
</comment>
<comment type="subunit">
    <text evidence="1">Part of the 30S ribosomal subunit. Contacts proteins S8 and S17. May interact with IF1 in the 30S initiation complex.</text>
</comment>
<comment type="similarity">
    <text evidence="1">Belongs to the universal ribosomal protein uS12 family.</text>
</comment>
<comment type="caution">
    <text evidence="3">Because the enzyme that would modify Asp-102 to 3-methylthioaspartic acid has not been found in the proteome of this organism, that modification is not predicted.</text>
</comment>
<name>RS12_STRPQ</name>
<sequence>MPTINQLVRKPRKSKIEKSDSPALNIGYNSHKKVQTKMAAPQKRGVATRVGTMTPKKPNSALRKFARVRLSNLIEVTAYIPGIGHNLQEHSVVLIRGGRVKDLPGVRYHIVRGALDTAGVADRKQGRSKYGAKRPKG</sequence>
<protein>
    <recommendedName>
        <fullName evidence="1">Small ribosomal subunit protein uS12</fullName>
    </recommendedName>
    <alternativeName>
        <fullName evidence="3">30S ribosomal protein S12</fullName>
    </alternativeName>
</protein>
<feature type="chain" id="PRO_0000411523" description="Small ribosomal subunit protein uS12">
    <location>
        <begin position="1"/>
        <end position="137"/>
    </location>
</feature>
<feature type="region of interest" description="Disordered" evidence="2">
    <location>
        <begin position="1"/>
        <end position="21"/>
    </location>
</feature>
<feature type="region of interest" description="Disordered" evidence="2">
    <location>
        <begin position="33"/>
        <end position="57"/>
    </location>
</feature>